<reference key="1">
    <citation type="journal article" date="2002" name="Nature">
        <title>The genome sequence of Schizosaccharomyces pombe.</title>
        <authorList>
            <person name="Wood V."/>
            <person name="Gwilliam R."/>
            <person name="Rajandream M.A."/>
            <person name="Lyne M.H."/>
            <person name="Lyne R."/>
            <person name="Stewart A."/>
            <person name="Sgouros J.G."/>
            <person name="Peat N."/>
            <person name="Hayles J."/>
            <person name="Baker S.G."/>
            <person name="Basham D."/>
            <person name="Bowman S."/>
            <person name="Brooks K."/>
            <person name="Brown D."/>
            <person name="Brown S."/>
            <person name="Chillingworth T."/>
            <person name="Churcher C.M."/>
            <person name="Collins M."/>
            <person name="Connor R."/>
            <person name="Cronin A."/>
            <person name="Davis P."/>
            <person name="Feltwell T."/>
            <person name="Fraser A."/>
            <person name="Gentles S."/>
            <person name="Goble A."/>
            <person name="Hamlin N."/>
            <person name="Harris D.E."/>
            <person name="Hidalgo J."/>
            <person name="Hodgson G."/>
            <person name="Holroyd S."/>
            <person name="Hornsby T."/>
            <person name="Howarth S."/>
            <person name="Huckle E.J."/>
            <person name="Hunt S."/>
            <person name="Jagels K."/>
            <person name="James K.D."/>
            <person name="Jones L."/>
            <person name="Jones M."/>
            <person name="Leather S."/>
            <person name="McDonald S."/>
            <person name="McLean J."/>
            <person name="Mooney P."/>
            <person name="Moule S."/>
            <person name="Mungall K.L."/>
            <person name="Murphy L.D."/>
            <person name="Niblett D."/>
            <person name="Odell C."/>
            <person name="Oliver K."/>
            <person name="O'Neil S."/>
            <person name="Pearson D."/>
            <person name="Quail M.A."/>
            <person name="Rabbinowitsch E."/>
            <person name="Rutherford K.M."/>
            <person name="Rutter S."/>
            <person name="Saunders D."/>
            <person name="Seeger K."/>
            <person name="Sharp S."/>
            <person name="Skelton J."/>
            <person name="Simmonds M.N."/>
            <person name="Squares R."/>
            <person name="Squares S."/>
            <person name="Stevens K."/>
            <person name="Taylor K."/>
            <person name="Taylor R.G."/>
            <person name="Tivey A."/>
            <person name="Walsh S.V."/>
            <person name="Warren T."/>
            <person name="Whitehead S."/>
            <person name="Woodward J.R."/>
            <person name="Volckaert G."/>
            <person name="Aert R."/>
            <person name="Robben J."/>
            <person name="Grymonprez B."/>
            <person name="Weltjens I."/>
            <person name="Vanstreels E."/>
            <person name="Rieger M."/>
            <person name="Schaefer M."/>
            <person name="Mueller-Auer S."/>
            <person name="Gabel C."/>
            <person name="Fuchs M."/>
            <person name="Duesterhoeft A."/>
            <person name="Fritzc C."/>
            <person name="Holzer E."/>
            <person name="Moestl D."/>
            <person name="Hilbert H."/>
            <person name="Borzym K."/>
            <person name="Langer I."/>
            <person name="Beck A."/>
            <person name="Lehrach H."/>
            <person name="Reinhardt R."/>
            <person name="Pohl T.M."/>
            <person name="Eger P."/>
            <person name="Zimmermann W."/>
            <person name="Wedler H."/>
            <person name="Wambutt R."/>
            <person name="Purnelle B."/>
            <person name="Goffeau A."/>
            <person name="Cadieu E."/>
            <person name="Dreano S."/>
            <person name="Gloux S."/>
            <person name="Lelaure V."/>
            <person name="Mottier S."/>
            <person name="Galibert F."/>
            <person name="Aves S.J."/>
            <person name="Xiang Z."/>
            <person name="Hunt C."/>
            <person name="Moore K."/>
            <person name="Hurst S.M."/>
            <person name="Lucas M."/>
            <person name="Rochet M."/>
            <person name="Gaillardin C."/>
            <person name="Tallada V.A."/>
            <person name="Garzon A."/>
            <person name="Thode G."/>
            <person name="Daga R.R."/>
            <person name="Cruzado L."/>
            <person name="Jimenez J."/>
            <person name="Sanchez M."/>
            <person name="del Rey F."/>
            <person name="Benito J."/>
            <person name="Dominguez A."/>
            <person name="Revuelta J.L."/>
            <person name="Moreno S."/>
            <person name="Armstrong J."/>
            <person name="Forsburg S.L."/>
            <person name="Cerutti L."/>
            <person name="Lowe T."/>
            <person name="McCombie W.R."/>
            <person name="Paulsen I."/>
            <person name="Potashkin J."/>
            <person name="Shpakovski G.V."/>
            <person name="Ussery D."/>
            <person name="Barrell B.G."/>
            <person name="Nurse P."/>
        </authorList>
    </citation>
    <scope>NUCLEOTIDE SEQUENCE [LARGE SCALE GENOMIC DNA]</scope>
    <source>
        <strain>972 / ATCC 24843</strain>
    </source>
</reference>
<organism>
    <name type="scientific">Schizosaccharomyces pombe (strain 972 / ATCC 24843)</name>
    <name type="common">Fission yeast</name>
    <dbReference type="NCBI Taxonomy" id="284812"/>
    <lineage>
        <taxon>Eukaryota</taxon>
        <taxon>Fungi</taxon>
        <taxon>Dikarya</taxon>
        <taxon>Ascomycota</taxon>
        <taxon>Taphrinomycotina</taxon>
        <taxon>Schizosaccharomycetes</taxon>
        <taxon>Schizosaccharomycetales</taxon>
        <taxon>Schizosaccharomycetaceae</taxon>
        <taxon>Schizosaccharomyces</taxon>
    </lineage>
</organism>
<sequence length="347" mass="38046">MLSNSEIKPSENSQKTKVLLTKANNASNERAPPPLSHFIAGGVAGMLGAIATAPLDVVKTRLQSDFYKDRFLKQTAKSKSPLTAAYRHFMDTCIILKNVKVHEGTRALFRGLGPNLIGTIPARSINFFSYGNGKRILADLFNNGQENSQIHLMAAAIAGVITSAATNPIWLVKTRLQLDKKSGQAAQYRSSIDCIIKTIRLEGFRGLYKGLSASLLGVGESTLQWVLYEKFKHAVAIRQLRRKELGIQETIYDKVLDWGGKLGGAGIAKFMAAGIAYPHEVVRTRLRQSPSINGTPKYTGLIQCFKLVWMEQGIVGLYGGLTAHLLRVVPNACILFGSYEVIMHFIG</sequence>
<name>RIM2_SCHPO</name>
<proteinExistence type="inferred from homology"/>
<gene>
    <name type="primary">rim2</name>
    <name evidence="5" type="ORF">SPAC688.09</name>
</gene>
<keyword id="KW-0472">Membrane</keyword>
<keyword id="KW-0496">Mitochondrion</keyword>
<keyword id="KW-0999">Mitochondrion inner membrane</keyword>
<keyword id="KW-1185">Reference proteome</keyword>
<keyword id="KW-0677">Repeat</keyword>
<keyword id="KW-0812">Transmembrane</keyword>
<keyword id="KW-1133">Transmembrane helix</keyword>
<keyword id="KW-0813">Transport</keyword>
<protein>
    <recommendedName>
        <fullName evidence="4">Mitochondrial carrier protein rim2</fullName>
    </recommendedName>
</protein>
<accession>Q9P6L7</accession>
<accession>A0AAN2L5B7</accession>
<evidence type="ECO:0000250" key="1">
    <source>
        <dbReference type="UniProtKB" id="P38127"/>
    </source>
</evidence>
<evidence type="ECO:0000255" key="2"/>
<evidence type="ECO:0000255" key="3">
    <source>
        <dbReference type="PROSITE-ProRule" id="PRU00282"/>
    </source>
</evidence>
<evidence type="ECO:0000305" key="4"/>
<evidence type="ECO:0000312" key="5">
    <source>
        <dbReference type="PomBase" id="SPAC688.09"/>
    </source>
</evidence>
<feature type="chain" id="PRO_0000310802" description="Mitochondrial carrier protein rim2">
    <location>
        <begin position="1"/>
        <end position="347"/>
    </location>
</feature>
<feature type="transmembrane region" description="Helical; Name=1" evidence="2">
    <location>
        <begin position="38"/>
        <end position="58"/>
    </location>
</feature>
<feature type="transmembrane region" description="Helical; Name=2" evidence="2">
    <location>
        <begin position="105"/>
        <end position="125"/>
    </location>
</feature>
<feature type="transmembrane region" description="Helical; Name=3" evidence="2">
    <location>
        <begin position="152"/>
        <end position="172"/>
    </location>
</feature>
<feature type="transmembrane region" description="Helical; Name=4" evidence="2">
    <location>
        <begin position="214"/>
        <end position="233"/>
    </location>
</feature>
<feature type="transmembrane region" description="Helical; Name=5" evidence="2">
    <location>
        <begin position="262"/>
        <end position="282"/>
    </location>
</feature>
<feature type="transmembrane region" description="Helical; Name=6" evidence="2">
    <location>
        <begin position="317"/>
        <end position="338"/>
    </location>
</feature>
<feature type="repeat" description="Solcar 1" evidence="3">
    <location>
        <begin position="32"/>
        <end position="136"/>
    </location>
</feature>
<feature type="repeat" description="Solcar 2" evidence="3">
    <location>
        <begin position="146"/>
        <end position="234"/>
    </location>
</feature>
<feature type="repeat" description="Solcar 3" evidence="3">
    <location>
        <begin position="256"/>
        <end position="345"/>
    </location>
</feature>
<dbReference type="EMBL" id="CU329670">
    <property type="protein sequence ID" value="CAK9838304.1"/>
    <property type="molecule type" value="Genomic_DNA"/>
</dbReference>
<dbReference type="RefSeq" id="NP_594067.1">
    <property type="nucleotide sequence ID" value="NM_001019491.2"/>
</dbReference>
<dbReference type="SMR" id="Q9P6L7"/>
<dbReference type="FunCoup" id="Q9P6L7">
    <property type="interactions" value="544"/>
</dbReference>
<dbReference type="STRING" id="284812.Q9P6L7"/>
<dbReference type="PaxDb" id="4896-SPAC688.09.1"/>
<dbReference type="EnsemblFungi" id="SPAC688.09.1">
    <property type="protein sequence ID" value="SPAC688.09.1:pep"/>
    <property type="gene ID" value="SPAC688.09"/>
</dbReference>
<dbReference type="GeneID" id="2543465"/>
<dbReference type="KEGG" id="spo:2543465"/>
<dbReference type="PomBase" id="SPAC688.09">
    <property type="gene designation" value="rim2"/>
</dbReference>
<dbReference type="VEuPathDB" id="FungiDB:SPAC688.09"/>
<dbReference type="eggNOG" id="KOG0757">
    <property type="taxonomic scope" value="Eukaryota"/>
</dbReference>
<dbReference type="HOGENOM" id="CLU_015166_6_0_1"/>
<dbReference type="InParanoid" id="Q9P6L7"/>
<dbReference type="OMA" id="WVMYEQM"/>
<dbReference type="PhylomeDB" id="Q9P6L7"/>
<dbReference type="PRO" id="PR:Q9P6L7"/>
<dbReference type="Proteomes" id="UP000002485">
    <property type="component" value="Chromosome I"/>
</dbReference>
<dbReference type="GO" id="GO:0005743">
    <property type="term" value="C:mitochondrial inner membrane"/>
    <property type="evidence" value="ECO:0007669"/>
    <property type="project" value="UniProtKB-KW"/>
</dbReference>
<dbReference type="GO" id="GO:0005739">
    <property type="term" value="C:mitochondrion"/>
    <property type="evidence" value="ECO:0000318"/>
    <property type="project" value="GO_Central"/>
</dbReference>
<dbReference type="GO" id="GO:0015218">
    <property type="term" value="F:pyrimidine nucleotide transmembrane transporter activity"/>
    <property type="evidence" value="ECO:0007669"/>
    <property type="project" value="InterPro"/>
</dbReference>
<dbReference type="GO" id="GO:0000002">
    <property type="term" value="P:mitochondrial genome maintenance"/>
    <property type="evidence" value="ECO:0000318"/>
    <property type="project" value="GO_Central"/>
</dbReference>
<dbReference type="GO" id="GO:1990519">
    <property type="term" value="P:pyrimidine nucleotide import into mitochondrion"/>
    <property type="evidence" value="ECO:0000318"/>
    <property type="project" value="GO_Central"/>
</dbReference>
<dbReference type="FunFam" id="1.50.40.10:FF:000088">
    <property type="entry name" value="Mitochondrial carrier protein RIM2"/>
    <property type="match status" value="1"/>
</dbReference>
<dbReference type="Gene3D" id="1.50.40.10">
    <property type="entry name" value="Mitochondrial carrier domain"/>
    <property type="match status" value="2"/>
</dbReference>
<dbReference type="InterPro" id="IPR002067">
    <property type="entry name" value="Mit_carrier"/>
</dbReference>
<dbReference type="InterPro" id="IPR018108">
    <property type="entry name" value="Mitochondrial_sb/sol_carrier"/>
</dbReference>
<dbReference type="InterPro" id="IPR023395">
    <property type="entry name" value="Mt_carrier_dom_sf"/>
</dbReference>
<dbReference type="InterPro" id="IPR049562">
    <property type="entry name" value="SLC25A33/36-like"/>
</dbReference>
<dbReference type="PANTHER" id="PTHR45829">
    <property type="entry name" value="MITOCHONDRIAL CARRIER PROTEIN RIM2"/>
    <property type="match status" value="1"/>
</dbReference>
<dbReference type="PANTHER" id="PTHR45829:SF4">
    <property type="entry name" value="MITOCHONDRIAL CARRIER PROTEIN RIM2"/>
    <property type="match status" value="1"/>
</dbReference>
<dbReference type="Pfam" id="PF00153">
    <property type="entry name" value="Mito_carr"/>
    <property type="match status" value="3"/>
</dbReference>
<dbReference type="PRINTS" id="PR00926">
    <property type="entry name" value="MITOCARRIER"/>
</dbReference>
<dbReference type="SUPFAM" id="SSF103506">
    <property type="entry name" value="Mitochondrial carrier"/>
    <property type="match status" value="1"/>
</dbReference>
<dbReference type="PROSITE" id="PS50920">
    <property type="entry name" value="SOLCAR"/>
    <property type="match status" value="3"/>
</dbReference>
<comment type="function">
    <text evidence="1">Mitochondrial transporter that imports/exports pyrimidine nucleotides into and from mitochondria. Selectively transports uridine, thymidine, and cytosine (deoxy)nucleoside di- and triphosphates by an antiport mechanism. Also transports, with lower efficiency, uridine, thymidine, and cytosine (deoxy)nucleoside monophosphates as well as guanosine (deoxy)nucleoside di- and triphosphate. May import (deoxy)nucleoside triphosphates in exchange for intramitochondrial (deoxy)nucleoside monophosphates, thus providing precursors necessary for de novo synthesis of mitochondrial DNA and RNA while exporting products of their catabolism. Mediates the transport of iron and other divalent metal ions like copper and zinc across the mitochondrial inner membrane in a pyrimidine nucleotide-dependent fashion. Catalyzes the co-import of pyrimidine nucleotides and divalent metal ions including ferrous iron. Participates in mitochondrial genome maintenance, regulation of mitochondrial membrane potential and mitochondrial respiration.</text>
</comment>
<comment type="catalytic activity">
    <reaction evidence="1">
        <text>5-methyl-UTP(out) + UTP(in) = 5-methyl-UTP(in) + UTP(out)</text>
        <dbReference type="Rhea" id="RHEA:73523"/>
        <dbReference type="ChEBI" id="CHEBI:46398"/>
        <dbReference type="ChEBI" id="CHEBI:63527"/>
    </reaction>
</comment>
<comment type="subcellular location">
    <subcellularLocation>
        <location evidence="1">Mitochondrion inner membrane</location>
        <topology evidence="2">Multi-pass membrane protein</topology>
    </subcellularLocation>
</comment>